<name>RNH2_CLOP1</name>
<proteinExistence type="inferred from homology"/>
<reference key="1">
    <citation type="journal article" date="2006" name="Genome Res.">
        <title>Skewed genomic variability in strains of the toxigenic bacterial pathogen, Clostridium perfringens.</title>
        <authorList>
            <person name="Myers G.S.A."/>
            <person name="Rasko D.A."/>
            <person name="Cheung J.K."/>
            <person name="Ravel J."/>
            <person name="Seshadri R."/>
            <person name="DeBoy R.T."/>
            <person name="Ren Q."/>
            <person name="Varga J."/>
            <person name="Awad M.M."/>
            <person name="Brinkac L.M."/>
            <person name="Daugherty S.C."/>
            <person name="Haft D.H."/>
            <person name="Dodson R.J."/>
            <person name="Madupu R."/>
            <person name="Nelson W.C."/>
            <person name="Rosovitz M.J."/>
            <person name="Sullivan S.A."/>
            <person name="Khouri H."/>
            <person name="Dimitrov G.I."/>
            <person name="Watkins K.L."/>
            <person name="Mulligan S."/>
            <person name="Benton J."/>
            <person name="Radune D."/>
            <person name="Fisher D.J."/>
            <person name="Atkins H.S."/>
            <person name="Hiscox T."/>
            <person name="Jost B.H."/>
            <person name="Billington S.J."/>
            <person name="Songer J.G."/>
            <person name="McClane B.A."/>
            <person name="Titball R.W."/>
            <person name="Rood J.I."/>
            <person name="Melville S.B."/>
            <person name="Paulsen I.T."/>
        </authorList>
    </citation>
    <scope>NUCLEOTIDE SEQUENCE [LARGE SCALE GENOMIC DNA]</scope>
    <source>
        <strain>ATCC 13124 / DSM 756 / JCM 1290 / NCIMB 6125 / NCTC 8237 / S 107 / Type A</strain>
    </source>
</reference>
<organism>
    <name type="scientific">Clostridium perfringens (strain ATCC 13124 / DSM 756 / JCM 1290 / NCIMB 6125 / NCTC 8237 / Type A)</name>
    <dbReference type="NCBI Taxonomy" id="195103"/>
    <lineage>
        <taxon>Bacteria</taxon>
        <taxon>Bacillati</taxon>
        <taxon>Bacillota</taxon>
        <taxon>Clostridia</taxon>
        <taxon>Eubacteriales</taxon>
        <taxon>Clostridiaceae</taxon>
        <taxon>Clostridium</taxon>
    </lineage>
</organism>
<protein>
    <recommendedName>
        <fullName evidence="1">Ribonuclease HII</fullName>
        <shortName evidence="1">RNase HII</shortName>
        <ecNumber evidence="1">3.1.26.4</ecNumber>
    </recommendedName>
</protein>
<keyword id="KW-0963">Cytoplasm</keyword>
<keyword id="KW-0255">Endonuclease</keyword>
<keyword id="KW-0378">Hydrolase</keyword>
<keyword id="KW-0464">Manganese</keyword>
<keyword id="KW-0479">Metal-binding</keyword>
<keyword id="KW-0540">Nuclease</keyword>
<dbReference type="EC" id="3.1.26.4" evidence="1"/>
<dbReference type="EMBL" id="CP000246">
    <property type="protein sequence ID" value="ABG83846.1"/>
    <property type="molecule type" value="Genomic_DNA"/>
</dbReference>
<dbReference type="RefSeq" id="WP_003478270.1">
    <property type="nucleotide sequence ID" value="NC_008261.1"/>
</dbReference>
<dbReference type="SMR" id="Q0TPP7"/>
<dbReference type="STRING" id="195103.CPF_1960"/>
<dbReference type="PaxDb" id="195103-CPF_1960"/>
<dbReference type="KEGG" id="cpf:CPF_1960"/>
<dbReference type="eggNOG" id="COG0164">
    <property type="taxonomic scope" value="Bacteria"/>
</dbReference>
<dbReference type="HOGENOM" id="CLU_036532_2_1_9"/>
<dbReference type="Proteomes" id="UP000001823">
    <property type="component" value="Chromosome"/>
</dbReference>
<dbReference type="GO" id="GO:0005737">
    <property type="term" value="C:cytoplasm"/>
    <property type="evidence" value="ECO:0007669"/>
    <property type="project" value="UniProtKB-SubCell"/>
</dbReference>
<dbReference type="GO" id="GO:0032299">
    <property type="term" value="C:ribonuclease H2 complex"/>
    <property type="evidence" value="ECO:0007669"/>
    <property type="project" value="TreeGrafter"/>
</dbReference>
<dbReference type="GO" id="GO:0030145">
    <property type="term" value="F:manganese ion binding"/>
    <property type="evidence" value="ECO:0007669"/>
    <property type="project" value="UniProtKB-UniRule"/>
</dbReference>
<dbReference type="GO" id="GO:0003723">
    <property type="term" value="F:RNA binding"/>
    <property type="evidence" value="ECO:0007669"/>
    <property type="project" value="InterPro"/>
</dbReference>
<dbReference type="GO" id="GO:0004523">
    <property type="term" value="F:RNA-DNA hybrid ribonuclease activity"/>
    <property type="evidence" value="ECO:0007669"/>
    <property type="project" value="UniProtKB-UniRule"/>
</dbReference>
<dbReference type="GO" id="GO:0043137">
    <property type="term" value="P:DNA replication, removal of RNA primer"/>
    <property type="evidence" value="ECO:0007669"/>
    <property type="project" value="TreeGrafter"/>
</dbReference>
<dbReference type="GO" id="GO:0006298">
    <property type="term" value="P:mismatch repair"/>
    <property type="evidence" value="ECO:0007669"/>
    <property type="project" value="TreeGrafter"/>
</dbReference>
<dbReference type="CDD" id="cd07182">
    <property type="entry name" value="RNase_HII_bacteria_HII_like"/>
    <property type="match status" value="1"/>
</dbReference>
<dbReference type="Gene3D" id="3.30.420.10">
    <property type="entry name" value="Ribonuclease H-like superfamily/Ribonuclease H"/>
    <property type="match status" value="1"/>
</dbReference>
<dbReference type="HAMAP" id="MF_00052_B">
    <property type="entry name" value="RNase_HII_B"/>
    <property type="match status" value="1"/>
</dbReference>
<dbReference type="InterPro" id="IPR022898">
    <property type="entry name" value="RNase_HII"/>
</dbReference>
<dbReference type="InterPro" id="IPR001352">
    <property type="entry name" value="RNase_HII/HIII"/>
</dbReference>
<dbReference type="InterPro" id="IPR024567">
    <property type="entry name" value="RNase_HII/HIII_dom"/>
</dbReference>
<dbReference type="InterPro" id="IPR012337">
    <property type="entry name" value="RNaseH-like_sf"/>
</dbReference>
<dbReference type="InterPro" id="IPR036397">
    <property type="entry name" value="RNaseH_sf"/>
</dbReference>
<dbReference type="NCBIfam" id="NF000594">
    <property type="entry name" value="PRK00015.1-1"/>
    <property type="match status" value="1"/>
</dbReference>
<dbReference type="NCBIfam" id="NF000595">
    <property type="entry name" value="PRK00015.1-3"/>
    <property type="match status" value="1"/>
</dbReference>
<dbReference type="PANTHER" id="PTHR10954">
    <property type="entry name" value="RIBONUCLEASE H2 SUBUNIT A"/>
    <property type="match status" value="1"/>
</dbReference>
<dbReference type="PANTHER" id="PTHR10954:SF18">
    <property type="entry name" value="RIBONUCLEASE HII"/>
    <property type="match status" value="1"/>
</dbReference>
<dbReference type="Pfam" id="PF01351">
    <property type="entry name" value="RNase_HII"/>
    <property type="match status" value="1"/>
</dbReference>
<dbReference type="SUPFAM" id="SSF53098">
    <property type="entry name" value="Ribonuclease H-like"/>
    <property type="match status" value="1"/>
</dbReference>
<dbReference type="PROSITE" id="PS51975">
    <property type="entry name" value="RNASE_H_2"/>
    <property type="match status" value="1"/>
</dbReference>
<feature type="chain" id="PRO_0000334885" description="Ribonuclease HII">
    <location>
        <begin position="1"/>
        <end position="272"/>
    </location>
</feature>
<feature type="domain" description="RNase H type-2" evidence="2">
    <location>
        <begin position="87"/>
        <end position="272"/>
    </location>
</feature>
<feature type="binding site" evidence="1">
    <location>
        <position position="93"/>
    </location>
    <ligand>
        <name>a divalent metal cation</name>
        <dbReference type="ChEBI" id="CHEBI:60240"/>
    </ligand>
</feature>
<feature type="binding site" evidence="1">
    <location>
        <position position="94"/>
    </location>
    <ligand>
        <name>a divalent metal cation</name>
        <dbReference type="ChEBI" id="CHEBI:60240"/>
    </ligand>
</feature>
<feature type="binding site" evidence="1">
    <location>
        <position position="188"/>
    </location>
    <ligand>
        <name>a divalent metal cation</name>
        <dbReference type="ChEBI" id="CHEBI:60240"/>
    </ligand>
</feature>
<gene>
    <name evidence="1" type="primary">rnhB</name>
    <name type="ordered locus">CPF_1960</name>
</gene>
<accession>Q0TPP7</accession>
<sequence>MDNLIKDMRENLNSYSFKVVSDLVKELDVNRDNKAQIKELADLLKEDKRKNVSSLGNRLEKNLNNLIKEEERVKNMYLFDKSFGDYKYVAGVDEVGRGPLAGPIVSAAVILDSSDLDDIILYINDSKKLSEHKREELSEIIKEKALSYSISMCDSKEIDEKGIGYCNNHVFIKACEGLSIKPDLVLSDGYLIKNFNGENKHVIKGDTKSACIACASIIAKVYRDNIMKEYHKKYPQYDFEKNVGYGTKTHVDALKEVGPTEIHRMSFLKNIL</sequence>
<evidence type="ECO:0000255" key="1">
    <source>
        <dbReference type="HAMAP-Rule" id="MF_00052"/>
    </source>
</evidence>
<evidence type="ECO:0000255" key="2">
    <source>
        <dbReference type="PROSITE-ProRule" id="PRU01319"/>
    </source>
</evidence>
<comment type="function">
    <text evidence="1">Endonuclease that specifically degrades the RNA of RNA-DNA hybrids.</text>
</comment>
<comment type="catalytic activity">
    <reaction evidence="1">
        <text>Endonucleolytic cleavage to 5'-phosphomonoester.</text>
        <dbReference type="EC" id="3.1.26.4"/>
    </reaction>
</comment>
<comment type="cofactor">
    <cofactor evidence="1">
        <name>Mn(2+)</name>
        <dbReference type="ChEBI" id="CHEBI:29035"/>
    </cofactor>
    <cofactor evidence="1">
        <name>Mg(2+)</name>
        <dbReference type="ChEBI" id="CHEBI:18420"/>
    </cofactor>
    <text evidence="1">Manganese or magnesium. Binds 1 divalent metal ion per monomer in the absence of substrate. May bind a second metal ion after substrate binding.</text>
</comment>
<comment type="subcellular location">
    <subcellularLocation>
        <location evidence="1">Cytoplasm</location>
    </subcellularLocation>
</comment>
<comment type="similarity">
    <text evidence="1">Belongs to the RNase HII family.</text>
</comment>